<feature type="chain" id="PRO_0000451424" description="DNA replication complex GINS protein PSF3">
    <location>
        <begin position="1"/>
        <end position="210"/>
    </location>
</feature>
<feature type="helix" evidence="7">
    <location>
        <begin position="21"/>
        <end position="26"/>
    </location>
</feature>
<feature type="strand" evidence="7">
    <location>
        <begin position="29"/>
        <end position="34"/>
    </location>
</feature>
<feature type="helix" evidence="7">
    <location>
        <begin position="43"/>
        <end position="45"/>
    </location>
</feature>
<feature type="strand" evidence="7">
    <location>
        <begin position="51"/>
        <end position="54"/>
    </location>
</feature>
<feature type="strand" evidence="7">
    <location>
        <begin position="59"/>
        <end position="63"/>
    </location>
</feature>
<feature type="helix" evidence="7">
    <location>
        <begin position="64"/>
        <end position="70"/>
    </location>
</feature>
<feature type="helix" evidence="7">
    <location>
        <begin position="84"/>
        <end position="86"/>
    </location>
</feature>
<feature type="helix" evidence="7">
    <location>
        <begin position="88"/>
        <end position="96"/>
    </location>
</feature>
<feature type="strand" evidence="7">
    <location>
        <begin position="98"/>
        <end position="101"/>
    </location>
</feature>
<feature type="turn" evidence="7">
    <location>
        <begin position="103"/>
        <end position="105"/>
    </location>
</feature>
<feature type="helix" evidence="7">
    <location>
        <begin position="110"/>
        <end position="116"/>
    </location>
</feature>
<feature type="helix" evidence="7">
    <location>
        <begin position="125"/>
        <end position="148"/>
    </location>
</feature>
<feature type="turn" evidence="7">
    <location>
        <begin position="156"/>
        <end position="158"/>
    </location>
</feature>
<feature type="helix" evidence="7">
    <location>
        <begin position="164"/>
        <end position="184"/>
    </location>
</feature>
<feature type="helix" evidence="7">
    <location>
        <begin position="195"/>
        <end position="202"/>
    </location>
</feature>
<evidence type="ECO:0000269" key="1">
    <source>
    </source>
</evidence>
<evidence type="ECO:0000269" key="2">
    <source>
    </source>
</evidence>
<evidence type="ECO:0000269" key="3">
    <source>
    </source>
</evidence>
<evidence type="ECO:0000305" key="4"/>
<evidence type="ECO:0000312" key="5">
    <source>
        <dbReference type="EMBL" id="OCT84682.1"/>
    </source>
</evidence>
<evidence type="ECO:0000312" key="6">
    <source>
        <dbReference type="Xenbase" id="XB-GENE-998293"/>
    </source>
</evidence>
<evidence type="ECO:0007829" key="7">
    <source>
        <dbReference type="PDB" id="8Q6O"/>
    </source>
</evidence>
<name>PSF3_XENLA</name>
<protein>
    <recommendedName>
        <fullName>DNA replication complex GINS protein PSF3</fullName>
    </recommendedName>
    <alternativeName>
        <fullName>GINS complex subunit 3</fullName>
    </alternativeName>
</protein>
<reference key="1">
    <citation type="journal article" date="2003" name="Genes Dev.">
        <title>A novel ring-like complex of Xenopus proteins essential for the initiation of DNA replication.</title>
        <authorList>
            <person name="Kubota Y."/>
            <person name="Takase Y."/>
            <person name="Komori Y."/>
            <person name="Hashimoto Y."/>
            <person name="Arata T."/>
            <person name="Kamimura Y."/>
            <person name="Araki H."/>
            <person name="Takisawa H."/>
        </authorList>
    </citation>
    <scope>NUCLEOTIDE SEQUENCE [GENOMIC DNA]</scope>
    <scope>FUNCTION</scope>
    <scope>IDENTIFICATION IN THE GINS COMPLEX</scope>
    <scope>SUBCELLULAR LOCATION</scope>
</reference>
<reference key="2">
    <citation type="journal article" date="2016" name="Nature">
        <title>Genome evolution in the allotetraploid frog Xenopus laevis.</title>
        <authorList>
            <person name="Session A.M."/>
            <person name="Uno Y."/>
            <person name="Kwon T."/>
            <person name="Chapman J.A."/>
            <person name="Toyoda A."/>
            <person name="Takahashi S."/>
            <person name="Fukui A."/>
            <person name="Hikosaka A."/>
            <person name="Suzuki A."/>
            <person name="Kondo M."/>
            <person name="van Heeringen S.J."/>
            <person name="Quigley I."/>
            <person name="Heinz S."/>
            <person name="Ogino H."/>
            <person name="Ochi H."/>
            <person name="Hellsten U."/>
            <person name="Lyons J.B."/>
            <person name="Simakov O."/>
            <person name="Putnam N."/>
            <person name="Stites J."/>
            <person name="Kuroki Y."/>
            <person name="Tanaka T."/>
            <person name="Michiue T."/>
            <person name="Watanabe M."/>
            <person name="Bogdanovic O."/>
            <person name="Lister R."/>
            <person name="Georgiou G."/>
            <person name="Paranjpe S.S."/>
            <person name="van Kruijsbergen I."/>
            <person name="Shu S."/>
            <person name="Carlson J."/>
            <person name="Kinoshita T."/>
            <person name="Ohta Y."/>
            <person name="Mawaribuchi S."/>
            <person name="Jenkins J."/>
            <person name="Grimwood J."/>
            <person name="Schmutz J."/>
            <person name="Mitros T."/>
            <person name="Mozaffari S.V."/>
            <person name="Suzuki Y."/>
            <person name="Haramoto Y."/>
            <person name="Yamamoto T.S."/>
            <person name="Takagi C."/>
            <person name="Heald R."/>
            <person name="Miller K."/>
            <person name="Haudenschild C."/>
            <person name="Kitzman J."/>
            <person name="Nakayama T."/>
            <person name="Izutsu Y."/>
            <person name="Robert J."/>
            <person name="Fortriede J."/>
            <person name="Burns K."/>
            <person name="Lotay V."/>
            <person name="Karimi K."/>
            <person name="Yasuoka Y."/>
            <person name="Dichmann D.S."/>
            <person name="Flajnik M.F."/>
            <person name="Houston D.W."/>
            <person name="Shendure J."/>
            <person name="DuPasquier L."/>
            <person name="Vize P.D."/>
            <person name="Zorn A.M."/>
            <person name="Ito M."/>
            <person name="Marcotte E.M."/>
            <person name="Wallingford J.B."/>
            <person name="Ito Y."/>
            <person name="Asashima M."/>
            <person name="Ueno N."/>
            <person name="Matsuda Y."/>
            <person name="Veenstra G.J."/>
            <person name="Fujiyama A."/>
            <person name="Harland R.M."/>
            <person name="Taira M."/>
            <person name="Rokhsar D.S."/>
        </authorList>
    </citation>
    <scope>NUCLEOTIDE SEQUENCE [LARGE SCALE GENOMIC DNA]</scope>
    <source>
        <strain>J</strain>
    </source>
</reference>
<reference key="3">
    <citation type="submission" date="2003-01" db="EMBL/GenBank/DDBJ databases">
        <authorList>
            <consortium name="NIH - Xenopus Gene Collection (XGC) project"/>
        </authorList>
    </citation>
    <scope>NUCLEOTIDE SEQUENCE [LARGE SCALE MRNA]</scope>
    <source>
        <tissue>Embryo</tissue>
        <tissue>Testis</tissue>
    </source>
</reference>
<reference key="4">
    <citation type="journal article" date="2019" name="Life. Sci Alliance">
        <title>Mitotic replisome disassembly depends on TRAIP ubiquitin ligase activity.</title>
        <authorList>
            <person name="Priego Moreno S."/>
            <person name="Jones R.M."/>
            <person name="Poovathumkadavil D."/>
            <person name="Scaramuzza S."/>
            <person name="Gambus A."/>
        </authorList>
    </citation>
    <scope>IDENTIFICATION IN THE CMG HELICASE COMPLEX</scope>
</reference>
<reference key="5">
    <citation type="journal article" date="2019" name="Nature">
        <title>TRAIP is a master regulator of DNA interstrand crosslink repair.</title>
        <authorList>
            <person name="Wu R.A."/>
            <person name="Semlow D.R."/>
            <person name="Kamimae-Lanning A.N."/>
            <person name="Kochenova O.V."/>
            <person name="Chistol G."/>
            <person name="Hodskinson M.R."/>
            <person name="Amunugama R."/>
            <person name="Sparks J.L."/>
            <person name="Wang M."/>
            <person name="Deng L."/>
            <person name="Mimoso C.A."/>
            <person name="Low E."/>
            <person name="Patel K.J."/>
            <person name="Walter J.C."/>
        </authorList>
    </citation>
    <scope>IDENTIFICATION IN THE CMG HELICASE COMPLEX</scope>
</reference>
<dbReference type="EMBL" id="AB097170">
    <property type="protein sequence ID" value="BAC66460.1"/>
    <property type="molecule type" value="Genomic_DNA"/>
</dbReference>
<dbReference type="EMBL" id="CM004472">
    <property type="protein sequence ID" value="OCT84682.1"/>
    <property type="status" value="ALT_SEQ"/>
    <property type="molecule type" value="Genomic_DNA"/>
</dbReference>
<dbReference type="EMBL" id="BC043845">
    <property type="protein sequence ID" value="AAH43845.1"/>
    <property type="molecule type" value="mRNA"/>
</dbReference>
<dbReference type="EMBL" id="BC106314">
    <property type="protein sequence ID" value="AAI06315.1"/>
    <property type="molecule type" value="mRNA"/>
</dbReference>
<dbReference type="RefSeq" id="NP_001080618.1">
    <property type="nucleotide sequence ID" value="NM_001087149.1"/>
</dbReference>
<dbReference type="PDB" id="8Q6O">
    <property type="method" value="EM"/>
    <property type="resolution" value="3.14 A"/>
    <property type="chains" value="I/O=1-210"/>
</dbReference>
<dbReference type="PDBsum" id="8Q6O"/>
<dbReference type="EMDB" id="EMD-18191"/>
<dbReference type="EMDB" id="EMD-18195"/>
<dbReference type="SMR" id="Q7ZT01"/>
<dbReference type="STRING" id="8355.A0A1L8GLF1"/>
<dbReference type="PaxDb" id="8355-A0A1L8GLF1"/>
<dbReference type="DNASU" id="380310"/>
<dbReference type="GeneID" id="380310"/>
<dbReference type="KEGG" id="xla:380310"/>
<dbReference type="AGR" id="Xenbase:XB-GENE-998293"/>
<dbReference type="CTD" id="380310"/>
<dbReference type="Xenbase" id="XB-GENE-998293">
    <property type="gene designation" value="gins3.L"/>
</dbReference>
<dbReference type="OrthoDB" id="10251744at2759"/>
<dbReference type="Proteomes" id="UP000186698">
    <property type="component" value="Chromosome 4L"/>
</dbReference>
<dbReference type="Proteomes" id="UP000694892">
    <property type="component" value="Chromosome 4L"/>
</dbReference>
<dbReference type="Bgee" id="380310">
    <property type="expression patterns" value="Expressed in oocyte and 19 other cell types or tissues"/>
</dbReference>
<dbReference type="GO" id="GO:0071162">
    <property type="term" value="C:CMG complex"/>
    <property type="evidence" value="ECO:0000314"/>
    <property type="project" value="UniProtKB"/>
</dbReference>
<dbReference type="GO" id="GO:0000811">
    <property type="term" value="C:GINS complex"/>
    <property type="evidence" value="ECO:0000353"/>
    <property type="project" value="UniProtKB"/>
</dbReference>
<dbReference type="GO" id="GO:0003682">
    <property type="term" value="F:chromatin binding"/>
    <property type="evidence" value="ECO:0000305"/>
    <property type="project" value="UniProtKB"/>
</dbReference>
<dbReference type="GO" id="GO:0006260">
    <property type="term" value="P:DNA replication"/>
    <property type="evidence" value="ECO:0000315"/>
    <property type="project" value="UniProtKB"/>
</dbReference>
<dbReference type="GO" id="GO:1902975">
    <property type="term" value="P:mitotic DNA replication initiation"/>
    <property type="evidence" value="ECO:0000318"/>
    <property type="project" value="GO_Central"/>
</dbReference>
<dbReference type="CDD" id="cd11713">
    <property type="entry name" value="GINS_A_psf3"/>
    <property type="match status" value="1"/>
</dbReference>
<dbReference type="CDD" id="cd21693">
    <property type="entry name" value="GINS_B_Psf3"/>
    <property type="match status" value="1"/>
</dbReference>
<dbReference type="FunFam" id="1.20.58.2050:FF:000001">
    <property type="entry name" value="DNA replication complex GINS protein PSF3"/>
    <property type="match status" value="1"/>
</dbReference>
<dbReference type="Gene3D" id="1.20.58.2050">
    <property type="match status" value="1"/>
</dbReference>
<dbReference type="InterPro" id="IPR021151">
    <property type="entry name" value="GINS_A"/>
</dbReference>
<dbReference type="InterPro" id="IPR036224">
    <property type="entry name" value="GINS_bundle-like_dom_sf"/>
</dbReference>
<dbReference type="InterPro" id="IPR010492">
    <property type="entry name" value="GINS_Psf3"/>
</dbReference>
<dbReference type="InterPro" id="IPR038437">
    <property type="entry name" value="GINS_Psf3_sf"/>
</dbReference>
<dbReference type="InterPro" id="IPR055221">
    <property type="entry name" value="PSF3_N"/>
</dbReference>
<dbReference type="PANTHER" id="PTHR22768">
    <property type="entry name" value="DNA REPLICATION COMPLEX GINS PROTEIN PSF3"/>
    <property type="match status" value="1"/>
</dbReference>
<dbReference type="PANTHER" id="PTHR22768:SF0">
    <property type="entry name" value="DNA REPLICATION COMPLEX GINS PROTEIN PSF3"/>
    <property type="match status" value="1"/>
</dbReference>
<dbReference type="Pfam" id="PF22466">
    <property type="entry name" value="PSF3_N"/>
    <property type="match status" value="1"/>
</dbReference>
<dbReference type="Pfam" id="PF05916">
    <property type="entry name" value="Sld5"/>
    <property type="match status" value="1"/>
</dbReference>
<dbReference type="SUPFAM" id="SSF158573">
    <property type="entry name" value="GINS helical bundle-like"/>
    <property type="match status" value="1"/>
</dbReference>
<dbReference type="SUPFAM" id="SSF160059">
    <property type="entry name" value="PriA/YqbF domain"/>
    <property type="match status" value="1"/>
</dbReference>
<organism>
    <name type="scientific">Xenopus laevis</name>
    <name type="common">African clawed frog</name>
    <dbReference type="NCBI Taxonomy" id="8355"/>
    <lineage>
        <taxon>Eukaryota</taxon>
        <taxon>Metazoa</taxon>
        <taxon>Chordata</taxon>
        <taxon>Craniata</taxon>
        <taxon>Vertebrata</taxon>
        <taxon>Euteleostomi</taxon>
        <taxon>Amphibia</taxon>
        <taxon>Batrachia</taxon>
        <taxon>Anura</taxon>
        <taxon>Pipoidea</taxon>
        <taxon>Pipidae</taxon>
        <taxon>Xenopodinae</taxon>
        <taxon>Xenopus</taxon>
        <taxon>Xenopus</taxon>
    </lineage>
</organism>
<sequence length="210" mass="23919">MWEPYMPVEPGLGREENFLSLEDLLMSQEKLPCCIESGFPRLGFLDKGGDSDSIPEGSKMELPLWLAKGLYDNKRRVLSVELPKIYREGWRTVFSADANVVDLHKMGPHYYGFGSQLLNFDSPENPEIAKTILQTFVGRFRRIMDSSQNAYNEDTSGLVARLDELERSLFRAGQRGLNAFQSWERGKAAQITASNLVQNYKKRKFNEADA</sequence>
<proteinExistence type="evidence at protein level"/>
<gene>
    <name evidence="6" type="primary">gins3</name>
    <name type="synonym">psf3</name>
    <name evidence="5" type="ORF">XELAEV_18022837mg</name>
</gene>
<accession>Q7ZT01</accession>
<accession>A0A1L8GLF1</accession>
<comment type="function">
    <text evidence="1">Required for correct functioning of the GINS complex, a complex that plays an essential role in the initiation of DNA replication, and progression of DNA replication forks. GINS complex is a core component of CDC45-MCM-GINS (CMG) helicase, the molecular machine that unwinds template DNA during replication, and around which the replisome is built.</text>
</comment>
<comment type="subunit">
    <text evidence="1 2 3">Component of the GINS complex which is a heterotetramer of gins1/psf1, gins2/psf2, gins3/psf3 and gins4/sld5 (PubMed:12730133). Component of the CMG helicase complex, composed of the mcm2-7 complex, the GINS complex and cdc45 (PubMed:30842657, PubMed:30979826).</text>
</comment>
<comment type="subcellular location">
    <subcellularLocation>
        <location evidence="1">Nucleus</location>
    </subcellularLocation>
    <subcellularLocation>
        <location evidence="1">Chromosome</location>
    </subcellularLocation>
    <text evidence="1">Associates with chromatin.</text>
</comment>
<comment type="similarity">
    <text evidence="4">Belongs to the GINS3/PSF3 family.</text>
</comment>
<comment type="sequence caution" evidence="4">
    <conflict type="erroneous gene model prediction">
        <sequence resource="EMBL-CDS" id="OCT84682"/>
    </conflict>
</comment>
<keyword id="KW-0002">3D-structure</keyword>
<keyword id="KW-0158">Chromosome</keyword>
<keyword id="KW-0235">DNA replication</keyword>
<keyword id="KW-0539">Nucleus</keyword>
<keyword id="KW-1185">Reference proteome</keyword>